<feature type="chain" id="PRO_0000208955" description="Ribonuclease T">
    <location>
        <begin position="1" status="less than"/>
        <end position="116"/>
    </location>
</feature>
<feature type="domain" description="Exonuclease" evidence="1">
    <location>
        <begin position="18"/>
        <end position="99"/>
    </location>
</feature>
<feature type="active site" description="Proton donor/acceptor" evidence="1">
    <location>
        <position position="86"/>
    </location>
</feature>
<feature type="site" description="Important for substrate binding and specificity" evidence="1">
    <location>
        <position position="29"/>
    </location>
</feature>
<feature type="site" description="Important for substrate binding and specificity" evidence="1">
    <location>
        <position position="51"/>
    </location>
</feature>
<feature type="non-terminal residue">
    <location>
        <position position="1"/>
    </location>
</feature>
<proteinExistence type="inferred from homology"/>
<organism>
    <name type="scientific">Azotobacter vinelandii</name>
    <dbReference type="NCBI Taxonomy" id="354"/>
    <lineage>
        <taxon>Bacteria</taxon>
        <taxon>Pseudomonadati</taxon>
        <taxon>Pseudomonadota</taxon>
        <taxon>Gammaproteobacteria</taxon>
        <taxon>Pseudomonadales</taxon>
        <taxon>Pseudomonadaceae</taxon>
        <taxon>Azotobacter</taxon>
    </lineage>
</organism>
<evidence type="ECO:0000255" key="1">
    <source>
        <dbReference type="HAMAP-Rule" id="MF_00157"/>
    </source>
</evidence>
<reference key="1">
    <citation type="submission" date="1999-01" db="EMBL/GenBank/DDBJ databases">
        <title>Azotobacter vinelandii bfd (bacterioferritin-associated ferredoxin).</title>
        <authorList>
            <person name="Garg R.P."/>
            <person name="Kurtz D.M. Jr."/>
        </authorList>
    </citation>
    <scope>NUCLEOTIDE SEQUENCE [GENOMIC DNA]</scope>
</reference>
<dbReference type="EC" id="3.1.13.-" evidence="1"/>
<dbReference type="EMBL" id="AF121138">
    <property type="protein sequence ID" value="AAD19703.1"/>
    <property type="molecule type" value="Genomic_DNA"/>
</dbReference>
<dbReference type="SMR" id="Q9Z5X0"/>
<dbReference type="GO" id="GO:0005829">
    <property type="term" value="C:cytosol"/>
    <property type="evidence" value="ECO:0007669"/>
    <property type="project" value="TreeGrafter"/>
</dbReference>
<dbReference type="GO" id="GO:0008408">
    <property type="term" value="F:3'-5' exonuclease activity"/>
    <property type="evidence" value="ECO:0007669"/>
    <property type="project" value="TreeGrafter"/>
</dbReference>
<dbReference type="GO" id="GO:0003676">
    <property type="term" value="F:nucleic acid binding"/>
    <property type="evidence" value="ECO:0007669"/>
    <property type="project" value="InterPro"/>
</dbReference>
<dbReference type="GO" id="GO:0004540">
    <property type="term" value="F:RNA nuclease activity"/>
    <property type="evidence" value="ECO:0007669"/>
    <property type="project" value="InterPro"/>
</dbReference>
<dbReference type="GO" id="GO:0045004">
    <property type="term" value="P:DNA replication proofreading"/>
    <property type="evidence" value="ECO:0007669"/>
    <property type="project" value="TreeGrafter"/>
</dbReference>
<dbReference type="GO" id="GO:0008033">
    <property type="term" value="P:tRNA processing"/>
    <property type="evidence" value="ECO:0007669"/>
    <property type="project" value="UniProtKB-KW"/>
</dbReference>
<dbReference type="Gene3D" id="3.30.420.10">
    <property type="entry name" value="Ribonuclease H-like superfamily/Ribonuclease H"/>
    <property type="match status" value="1"/>
</dbReference>
<dbReference type="HAMAP" id="MF_00157">
    <property type="entry name" value="RNase_T"/>
    <property type="match status" value="1"/>
</dbReference>
<dbReference type="InterPro" id="IPR013520">
    <property type="entry name" value="Exonuclease_RNaseT/DNA_pol3"/>
</dbReference>
<dbReference type="InterPro" id="IPR005987">
    <property type="entry name" value="RNase_T"/>
</dbReference>
<dbReference type="InterPro" id="IPR012337">
    <property type="entry name" value="RNaseH-like_sf"/>
</dbReference>
<dbReference type="InterPro" id="IPR036397">
    <property type="entry name" value="RNaseH_sf"/>
</dbReference>
<dbReference type="PANTHER" id="PTHR30231">
    <property type="entry name" value="DNA POLYMERASE III SUBUNIT EPSILON"/>
    <property type="match status" value="1"/>
</dbReference>
<dbReference type="PANTHER" id="PTHR30231:SF2">
    <property type="entry name" value="RIBONUCLEASE T"/>
    <property type="match status" value="1"/>
</dbReference>
<dbReference type="Pfam" id="PF00929">
    <property type="entry name" value="RNase_T"/>
    <property type="match status" value="1"/>
</dbReference>
<dbReference type="SUPFAM" id="SSF53098">
    <property type="entry name" value="Ribonuclease H-like"/>
    <property type="match status" value="1"/>
</dbReference>
<accession>Q9Z5X0</accession>
<name>RNT_AZOVI</name>
<keyword id="KW-0269">Exonuclease</keyword>
<keyword id="KW-0378">Hydrolase</keyword>
<keyword id="KW-0540">Nuclease</keyword>
<keyword id="KW-0819">tRNA processing</keyword>
<protein>
    <recommendedName>
        <fullName evidence="1">Ribonuclease T</fullName>
        <ecNumber evidence="1">3.1.13.-</ecNumber>
    </recommendedName>
    <alternativeName>
        <fullName evidence="1">Exoribonuclease T</fullName>
        <shortName evidence="1">RNase T</shortName>
    </alternativeName>
</protein>
<comment type="function">
    <text evidence="1">Trims short 3' overhangs of a variety of RNA species, leaving a one or two nucleotide 3' overhang. Responsible for the end-turnover of tRNA: specifically removes the terminal AMP residue from uncharged tRNA (tRNA-C-C-A). Also appears to be involved in tRNA biosynthesis.</text>
</comment>
<comment type="subunit">
    <text evidence="1">Homodimer.</text>
</comment>
<comment type="similarity">
    <text evidence="1">Belongs to the RNase T family.</text>
</comment>
<gene>
    <name evidence="1" type="primary">rnt</name>
</gene>
<sequence length="116" mass="12769">LQEIFRGVRKAVKSHGCKRAILVGHNSSFDLAFLNAAVARCDIKRNPFHPFSSFDTATLAGLAYGQTVLAKACQSAGIEFDGREAHSARYDTEKTAELFCGIVNRWKEMGGWVDFA</sequence>